<organism>
    <name type="scientific">Escherichia coli O157:H7</name>
    <dbReference type="NCBI Taxonomy" id="83334"/>
    <lineage>
        <taxon>Bacteria</taxon>
        <taxon>Pseudomonadati</taxon>
        <taxon>Pseudomonadota</taxon>
        <taxon>Gammaproteobacteria</taxon>
        <taxon>Enterobacterales</taxon>
        <taxon>Enterobacteriaceae</taxon>
        <taxon>Escherichia</taxon>
    </lineage>
</organism>
<comment type="function">
    <text evidence="1">Mediates magnesium influx to the cytosol.</text>
</comment>
<comment type="catalytic activity">
    <reaction evidence="2">
        <text>Mg(2+)(out) + ATP + H2O = Mg(2+)(in) + ADP + phosphate + H(+)</text>
        <dbReference type="Rhea" id="RHEA:10260"/>
        <dbReference type="ChEBI" id="CHEBI:15377"/>
        <dbReference type="ChEBI" id="CHEBI:15378"/>
        <dbReference type="ChEBI" id="CHEBI:18420"/>
        <dbReference type="ChEBI" id="CHEBI:30616"/>
        <dbReference type="ChEBI" id="CHEBI:43474"/>
        <dbReference type="ChEBI" id="CHEBI:456216"/>
        <dbReference type="EC" id="7.2.2.14"/>
    </reaction>
</comment>
<comment type="subcellular location">
    <subcellularLocation>
        <location evidence="1">Cell inner membrane</location>
        <topology evidence="1">Multi-pass membrane protein</topology>
    </subcellularLocation>
</comment>
<comment type="induction">
    <text evidence="4">By low extracellular levels of Mg(2+), proline and by osmotic shock. The leader of mgtA mRNA functions as a riboswitch, favoring transcription under low Mg(2+). Under limiting proline levels the MgtL peptide encoded within the mgtA leader is unable to be translated, also favoring transcription of full mgtA mRNA. Osmotic shock induction also depends on MgtL translation (Probable).</text>
</comment>
<comment type="similarity">
    <text evidence="4">Belongs to the cation transport ATPase (P-type) (TC 3.A.3) family. Type IIIB subfamily.</text>
</comment>
<sequence>MFKEIFTRLIRHLPSRLVHRDPLPGAQQTVNTVVPPSLSAHCLKMAVMPEEELWKTFDTHPEGLNQAEVESAREQHGENKLPAQQPSPWWVHLWVCYRNPFNILLTILGAISYATEDLFAAGVIALMVAISTLLNFIQEARSTKAADALKAMVSNTATVLRVINDKGENGWLEIPIDQLVPGDIIKLAAGDMIPADLRILQARDLFVAQASLTGESLPVEKAATTRQPEHSNPLECDTLCFMGTTVVSGTAQAMVIATGANTWFGQLAGRVSEQESEPNAFQQGISRVSMLLIRFMLVMAPVVLLINGYTKGDWWEAALFALSVAVGLTPEMLPMIVTSTLARGAVKLSKQKVIVKHLDAIQNFGAMDILCTDKTGTLTQDKIVLENHTDISGKTSERVLHSAWLNSHYQTGLKNLLDTAVLEGTDEESARSLASRWQKIDEIPFDFERRRMSVVVAENTEHHQLVCKGALQEILNVCSQVRHNGEIVPLDDIMLRKIKRVTDTLNRQGLRVVAVATKYLPAREGDYQRADESDLILEGYIAFLDPPKETTAPALKALKASGITVKILTGDSELVAAKVCHEVGLDAGEVVIGSDIETLSDDELANLAQRTTLFARLTPMHKERIVTLLKREGHVVGFMGDGINDAPALRAADIGISVDGAVDIAREAADIILLEKSLMVLEEGVIEGRRTFANMLKYIKMTASSNFGNVFSVLVASAFLPFLPMLPLHLLIQNLLYDVSQVAIPFDNVDDEQIQKPQRWNPADLGRFMIFFGPISSIFDILTFCLMWWVFHANTPETQTLFQSGWFVVGLLSQTLIVHMIRTRRVPFIQSCASWPLMIMTVIVMIVGIALPFSPLASYLQLQALPLSYFPWLVAILAGYMTLTQLVKGFYSRRYGWQ</sequence>
<dbReference type="EC" id="7.2.2.14" evidence="2"/>
<dbReference type="EMBL" id="AE005174">
    <property type="protein sequence ID" value="AAG59440.1"/>
    <property type="molecule type" value="Genomic_DNA"/>
</dbReference>
<dbReference type="EMBL" id="BA000007">
    <property type="protein sequence ID" value="BAB38642.1"/>
    <property type="molecule type" value="Genomic_DNA"/>
</dbReference>
<dbReference type="PIR" id="C91281">
    <property type="entry name" value="C91281"/>
</dbReference>
<dbReference type="RefSeq" id="NP_313246.1">
    <property type="nucleotide sequence ID" value="NC_002695.1"/>
</dbReference>
<dbReference type="RefSeq" id="WP_000471889.1">
    <property type="nucleotide sequence ID" value="NZ_VOAI01000023.1"/>
</dbReference>
<dbReference type="SMR" id="P0ABB9"/>
<dbReference type="STRING" id="155864.Z5853"/>
<dbReference type="GeneID" id="913855"/>
<dbReference type="KEGG" id="ece:Z5853"/>
<dbReference type="KEGG" id="ecs:ECs_5219"/>
<dbReference type="PATRIC" id="fig|386585.9.peg.5457"/>
<dbReference type="eggNOG" id="COG0474">
    <property type="taxonomic scope" value="Bacteria"/>
</dbReference>
<dbReference type="HOGENOM" id="CLU_002360_6_3_6"/>
<dbReference type="OMA" id="KMHACET"/>
<dbReference type="Proteomes" id="UP000000558">
    <property type="component" value="Chromosome"/>
</dbReference>
<dbReference type="Proteomes" id="UP000002519">
    <property type="component" value="Chromosome"/>
</dbReference>
<dbReference type="GO" id="GO:0005886">
    <property type="term" value="C:plasma membrane"/>
    <property type="evidence" value="ECO:0007669"/>
    <property type="project" value="UniProtKB-SubCell"/>
</dbReference>
<dbReference type="GO" id="GO:0005524">
    <property type="term" value="F:ATP binding"/>
    <property type="evidence" value="ECO:0007669"/>
    <property type="project" value="UniProtKB-KW"/>
</dbReference>
<dbReference type="GO" id="GO:0016887">
    <property type="term" value="F:ATP hydrolysis activity"/>
    <property type="evidence" value="ECO:0007669"/>
    <property type="project" value="InterPro"/>
</dbReference>
<dbReference type="GO" id="GO:0046872">
    <property type="term" value="F:metal ion binding"/>
    <property type="evidence" value="ECO:0007669"/>
    <property type="project" value="UniProtKB-KW"/>
</dbReference>
<dbReference type="GO" id="GO:0015444">
    <property type="term" value="F:P-type magnesium transporter activity"/>
    <property type="evidence" value="ECO:0007669"/>
    <property type="project" value="UniProtKB-EC"/>
</dbReference>
<dbReference type="CDD" id="cd02077">
    <property type="entry name" value="P-type_ATPase_Mg"/>
    <property type="match status" value="1"/>
</dbReference>
<dbReference type="FunFam" id="2.70.150.10:FF:000045">
    <property type="entry name" value="Magnesium-translocating P-type ATPase"/>
    <property type="match status" value="1"/>
</dbReference>
<dbReference type="FunFam" id="3.40.1110.10:FF:000041">
    <property type="entry name" value="Magnesium-translocating P-type ATPase"/>
    <property type="match status" value="1"/>
</dbReference>
<dbReference type="Gene3D" id="3.40.1110.10">
    <property type="entry name" value="Calcium-transporting ATPase, cytoplasmic domain N"/>
    <property type="match status" value="1"/>
</dbReference>
<dbReference type="Gene3D" id="2.70.150.10">
    <property type="entry name" value="Calcium-transporting ATPase, cytoplasmic transduction domain A"/>
    <property type="match status" value="1"/>
</dbReference>
<dbReference type="Gene3D" id="1.20.1110.10">
    <property type="entry name" value="Calcium-transporting ATPase, transmembrane domain"/>
    <property type="match status" value="1"/>
</dbReference>
<dbReference type="Gene3D" id="3.40.50.1000">
    <property type="entry name" value="HAD superfamily/HAD-like"/>
    <property type="match status" value="1"/>
</dbReference>
<dbReference type="InterPro" id="IPR006068">
    <property type="entry name" value="ATPase_P-typ_cation-transptr_C"/>
</dbReference>
<dbReference type="InterPro" id="IPR004014">
    <property type="entry name" value="ATPase_P-typ_cation-transptr_N"/>
</dbReference>
<dbReference type="InterPro" id="IPR023299">
    <property type="entry name" value="ATPase_P-typ_cyto_dom_N"/>
</dbReference>
<dbReference type="InterPro" id="IPR018303">
    <property type="entry name" value="ATPase_P-typ_P_site"/>
</dbReference>
<dbReference type="InterPro" id="IPR023298">
    <property type="entry name" value="ATPase_P-typ_TM_dom_sf"/>
</dbReference>
<dbReference type="InterPro" id="IPR008250">
    <property type="entry name" value="ATPase_P-typ_transduc_dom_A_sf"/>
</dbReference>
<dbReference type="InterPro" id="IPR036412">
    <property type="entry name" value="HAD-like_sf"/>
</dbReference>
<dbReference type="InterPro" id="IPR023214">
    <property type="entry name" value="HAD_sf"/>
</dbReference>
<dbReference type="InterPro" id="IPR006415">
    <property type="entry name" value="P-type_ATPase_IIIB"/>
</dbReference>
<dbReference type="InterPro" id="IPR001757">
    <property type="entry name" value="P_typ_ATPase"/>
</dbReference>
<dbReference type="InterPro" id="IPR044492">
    <property type="entry name" value="P_typ_ATPase_HD_dom"/>
</dbReference>
<dbReference type="NCBIfam" id="TIGR01524">
    <property type="entry name" value="ATPase-IIIB_Mg"/>
    <property type="match status" value="1"/>
</dbReference>
<dbReference type="NCBIfam" id="TIGR01494">
    <property type="entry name" value="ATPase_P-type"/>
    <property type="match status" value="2"/>
</dbReference>
<dbReference type="NCBIfam" id="NF011702">
    <property type="entry name" value="PRK15122.1"/>
    <property type="match status" value="1"/>
</dbReference>
<dbReference type="PANTHER" id="PTHR42861">
    <property type="entry name" value="CALCIUM-TRANSPORTING ATPASE"/>
    <property type="match status" value="1"/>
</dbReference>
<dbReference type="Pfam" id="PF00689">
    <property type="entry name" value="Cation_ATPase_C"/>
    <property type="match status" value="1"/>
</dbReference>
<dbReference type="Pfam" id="PF00690">
    <property type="entry name" value="Cation_ATPase_N"/>
    <property type="match status" value="1"/>
</dbReference>
<dbReference type="Pfam" id="PF00122">
    <property type="entry name" value="E1-E2_ATPase"/>
    <property type="match status" value="1"/>
</dbReference>
<dbReference type="Pfam" id="PF00702">
    <property type="entry name" value="Hydrolase"/>
    <property type="match status" value="1"/>
</dbReference>
<dbReference type="PRINTS" id="PR01836">
    <property type="entry name" value="MGATPASE"/>
</dbReference>
<dbReference type="SFLD" id="SFLDS00003">
    <property type="entry name" value="Haloacid_Dehalogenase"/>
    <property type="match status" value="1"/>
</dbReference>
<dbReference type="SFLD" id="SFLDF00027">
    <property type="entry name" value="p-type_atpase"/>
    <property type="match status" value="1"/>
</dbReference>
<dbReference type="SMART" id="SM00831">
    <property type="entry name" value="Cation_ATPase_N"/>
    <property type="match status" value="1"/>
</dbReference>
<dbReference type="SUPFAM" id="SSF81653">
    <property type="entry name" value="Calcium ATPase, transduction domain A"/>
    <property type="match status" value="1"/>
</dbReference>
<dbReference type="SUPFAM" id="SSF81665">
    <property type="entry name" value="Calcium ATPase, transmembrane domain M"/>
    <property type="match status" value="1"/>
</dbReference>
<dbReference type="SUPFAM" id="SSF56784">
    <property type="entry name" value="HAD-like"/>
    <property type="match status" value="1"/>
</dbReference>
<dbReference type="SUPFAM" id="SSF81660">
    <property type="entry name" value="Metal cation-transporting ATPase, ATP-binding domain N"/>
    <property type="match status" value="1"/>
</dbReference>
<dbReference type="PROSITE" id="PS00154">
    <property type="entry name" value="ATPASE_E1_E2"/>
    <property type="match status" value="1"/>
</dbReference>
<gene>
    <name type="primary">mgtA</name>
    <name type="ordered locus">Z5853</name>
    <name type="ordered locus">ECs5219</name>
</gene>
<evidence type="ECO:0000250" key="1"/>
<evidence type="ECO:0000250" key="2">
    <source>
        <dbReference type="UniProtKB" id="P36640"/>
    </source>
</evidence>
<evidence type="ECO:0000255" key="3"/>
<evidence type="ECO:0000305" key="4"/>
<reference key="1">
    <citation type="journal article" date="2001" name="Nature">
        <title>Genome sequence of enterohaemorrhagic Escherichia coli O157:H7.</title>
        <authorList>
            <person name="Perna N.T."/>
            <person name="Plunkett G. III"/>
            <person name="Burland V."/>
            <person name="Mau B."/>
            <person name="Glasner J.D."/>
            <person name="Rose D.J."/>
            <person name="Mayhew G.F."/>
            <person name="Evans P.S."/>
            <person name="Gregor J."/>
            <person name="Kirkpatrick H.A."/>
            <person name="Posfai G."/>
            <person name="Hackett J."/>
            <person name="Klink S."/>
            <person name="Boutin A."/>
            <person name="Shao Y."/>
            <person name="Miller L."/>
            <person name="Grotbeck E.J."/>
            <person name="Davis N.W."/>
            <person name="Lim A."/>
            <person name="Dimalanta E.T."/>
            <person name="Potamousis K."/>
            <person name="Apodaca J."/>
            <person name="Anantharaman T.S."/>
            <person name="Lin J."/>
            <person name="Yen G."/>
            <person name="Schwartz D.C."/>
            <person name="Welch R.A."/>
            <person name="Blattner F.R."/>
        </authorList>
    </citation>
    <scope>NUCLEOTIDE SEQUENCE [LARGE SCALE GENOMIC DNA]</scope>
    <source>
        <strain>O157:H7 / EDL933 / ATCC 700927 / EHEC</strain>
    </source>
</reference>
<reference key="2">
    <citation type="journal article" date="2001" name="DNA Res.">
        <title>Complete genome sequence of enterohemorrhagic Escherichia coli O157:H7 and genomic comparison with a laboratory strain K-12.</title>
        <authorList>
            <person name="Hayashi T."/>
            <person name="Makino K."/>
            <person name="Ohnishi M."/>
            <person name="Kurokawa K."/>
            <person name="Ishii K."/>
            <person name="Yokoyama K."/>
            <person name="Han C.-G."/>
            <person name="Ohtsubo E."/>
            <person name="Nakayama K."/>
            <person name="Murata T."/>
            <person name="Tanaka M."/>
            <person name="Tobe T."/>
            <person name="Iida T."/>
            <person name="Takami H."/>
            <person name="Honda T."/>
            <person name="Sasakawa C."/>
            <person name="Ogasawara N."/>
            <person name="Yasunaga T."/>
            <person name="Kuhara S."/>
            <person name="Shiba T."/>
            <person name="Hattori M."/>
            <person name="Shinagawa H."/>
        </authorList>
    </citation>
    <scope>NUCLEOTIDE SEQUENCE [LARGE SCALE GENOMIC DNA]</scope>
    <source>
        <strain>O157:H7 / Sakai / RIMD 0509952 / EHEC</strain>
    </source>
</reference>
<feature type="chain" id="PRO_0000046183" description="Magnesium-transporting ATPase, P-type 1">
    <location>
        <begin position="1"/>
        <end position="898"/>
    </location>
</feature>
<feature type="topological domain" description="Cytoplasmic" evidence="3">
    <location>
        <begin position="1"/>
        <end position="94"/>
    </location>
</feature>
<feature type="transmembrane region" description="Helical; Name=1" evidence="3">
    <location>
        <begin position="95"/>
        <end position="115"/>
    </location>
</feature>
<feature type="topological domain" description="Extracellular" evidence="3">
    <location>
        <position position="116"/>
    </location>
</feature>
<feature type="transmembrane region" description="Helical; Name=2" evidence="3">
    <location>
        <begin position="117"/>
        <end position="137"/>
    </location>
</feature>
<feature type="topological domain" description="Cytoplasmic" evidence="3">
    <location>
        <begin position="138"/>
        <end position="287"/>
    </location>
</feature>
<feature type="transmembrane region" description="Helical; Name=3" evidence="3">
    <location>
        <begin position="288"/>
        <end position="308"/>
    </location>
</feature>
<feature type="topological domain" description="Extracellular" evidence="3">
    <location>
        <begin position="309"/>
        <end position="317"/>
    </location>
</feature>
<feature type="transmembrane region" description="Helical; Name=4" evidence="3">
    <location>
        <begin position="318"/>
        <end position="335"/>
    </location>
</feature>
<feature type="topological domain" description="Cytoplasmic" evidence="3">
    <location>
        <begin position="336"/>
        <end position="695"/>
    </location>
</feature>
<feature type="transmembrane region" description="Helical; Name=5" evidence="3">
    <location>
        <begin position="696"/>
        <end position="715"/>
    </location>
</feature>
<feature type="topological domain" description="Extracellular" evidence="3">
    <location>
        <begin position="716"/>
        <end position="724"/>
    </location>
</feature>
<feature type="transmembrane region" description="Helical; Name=6" evidence="3">
    <location>
        <begin position="725"/>
        <end position="744"/>
    </location>
</feature>
<feature type="topological domain" description="Cytoplasmic" evidence="3">
    <location>
        <begin position="745"/>
        <end position="766"/>
    </location>
</feature>
<feature type="transmembrane region" description="Helical; Name=7" evidence="3">
    <location>
        <begin position="767"/>
        <end position="790"/>
    </location>
</feature>
<feature type="topological domain" description="Extracellular" evidence="3">
    <location>
        <begin position="791"/>
        <end position="799"/>
    </location>
</feature>
<feature type="transmembrane region" description="Helical; Name=8" evidence="3">
    <location>
        <begin position="800"/>
        <end position="818"/>
    </location>
</feature>
<feature type="topological domain" description="Cytoplasmic" evidence="3">
    <location>
        <begin position="819"/>
        <end position="831"/>
    </location>
</feature>
<feature type="transmembrane region" description="Helical; Name=9" evidence="3">
    <location>
        <begin position="832"/>
        <end position="851"/>
    </location>
</feature>
<feature type="topological domain" description="Extracellular" evidence="3">
    <location>
        <begin position="852"/>
        <end position="866"/>
    </location>
</feature>
<feature type="transmembrane region" description="Helical; Name=10" evidence="3">
    <location>
        <begin position="867"/>
        <end position="886"/>
    </location>
</feature>
<feature type="topological domain" description="Cytoplasmic" evidence="3">
    <location>
        <begin position="887"/>
        <end position="898"/>
    </location>
</feature>
<feature type="active site" description="4-aspartylphosphate intermediate" evidence="1">
    <location>
        <position position="373"/>
    </location>
</feature>
<feature type="binding site" evidence="3">
    <location>
        <position position="331"/>
    </location>
    <ligand>
        <name>Mg(2+)</name>
        <dbReference type="ChEBI" id="CHEBI:18420"/>
    </ligand>
</feature>
<feature type="binding site" evidence="1">
    <location>
        <position position="641"/>
    </location>
    <ligand>
        <name>Mg(2+)</name>
        <dbReference type="ChEBI" id="CHEBI:18420"/>
    </ligand>
</feature>
<feature type="binding site" evidence="1">
    <location>
        <position position="645"/>
    </location>
    <ligand>
        <name>Mg(2+)</name>
        <dbReference type="ChEBI" id="CHEBI:18420"/>
    </ligand>
</feature>
<feature type="binding site" evidence="3">
    <location>
        <position position="709"/>
    </location>
    <ligand>
        <name>Mg(2+)</name>
        <dbReference type="ChEBI" id="CHEBI:18420"/>
    </ligand>
</feature>
<feature type="binding site" evidence="3">
    <location>
        <position position="734"/>
    </location>
    <ligand>
        <name>Mg(2+)</name>
        <dbReference type="ChEBI" id="CHEBI:18420"/>
    </ligand>
</feature>
<feature type="binding site" evidence="3">
    <location>
        <position position="738"/>
    </location>
    <ligand>
        <name>Mg(2+)</name>
        <dbReference type="ChEBI" id="CHEBI:18420"/>
    </ligand>
</feature>
<accession>P0ABB9</accession>
<accession>P39168</accession>
<keyword id="KW-0067">ATP-binding</keyword>
<keyword id="KW-0997">Cell inner membrane</keyword>
<keyword id="KW-1003">Cell membrane</keyword>
<keyword id="KW-0460">Magnesium</keyword>
<keyword id="KW-0472">Membrane</keyword>
<keyword id="KW-0479">Metal-binding</keyword>
<keyword id="KW-0547">Nucleotide-binding</keyword>
<keyword id="KW-0597">Phosphoprotein</keyword>
<keyword id="KW-1185">Reference proteome</keyword>
<keyword id="KW-1278">Translocase</keyword>
<keyword id="KW-0812">Transmembrane</keyword>
<keyword id="KW-1133">Transmembrane helix</keyword>
<proteinExistence type="inferred from homology"/>
<protein>
    <recommendedName>
        <fullName>Magnesium-transporting ATPase, P-type 1</fullName>
        <ecNumber evidence="2">7.2.2.14</ecNumber>
    </recommendedName>
    <alternativeName>
        <fullName>Mg(2+) transport ATPase, P-type 1</fullName>
    </alternativeName>
</protein>
<name>ATMA_ECO57</name>